<evidence type="ECO:0000255" key="1">
    <source>
        <dbReference type="HAMAP-Rule" id="MF_01693"/>
    </source>
</evidence>
<proteinExistence type="inferred from homology"/>
<dbReference type="EC" id="2.3.1.47" evidence="1"/>
<dbReference type="EMBL" id="CP000266">
    <property type="protein sequence ID" value="ABF02992.1"/>
    <property type="molecule type" value="Genomic_DNA"/>
</dbReference>
<dbReference type="RefSeq" id="WP_000118810.1">
    <property type="nucleotide sequence ID" value="NC_008258.1"/>
</dbReference>
<dbReference type="SMR" id="Q0T6I4"/>
<dbReference type="KEGG" id="sfv:SFV_0759"/>
<dbReference type="HOGENOM" id="CLU_015846_11_2_6"/>
<dbReference type="UniPathway" id="UPA00078"/>
<dbReference type="Proteomes" id="UP000000659">
    <property type="component" value="Chromosome"/>
</dbReference>
<dbReference type="GO" id="GO:0008710">
    <property type="term" value="F:8-amino-7-oxononanoate synthase activity"/>
    <property type="evidence" value="ECO:0007669"/>
    <property type="project" value="UniProtKB-UniRule"/>
</dbReference>
<dbReference type="GO" id="GO:0030170">
    <property type="term" value="F:pyridoxal phosphate binding"/>
    <property type="evidence" value="ECO:0007669"/>
    <property type="project" value="UniProtKB-UniRule"/>
</dbReference>
<dbReference type="GO" id="GO:0009102">
    <property type="term" value="P:biotin biosynthetic process"/>
    <property type="evidence" value="ECO:0007669"/>
    <property type="project" value="UniProtKB-UniRule"/>
</dbReference>
<dbReference type="CDD" id="cd06454">
    <property type="entry name" value="KBL_like"/>
    <property type="match status" value="1"/>
</dbReference>
<dbReference type="FunFam" id="3.40.640.10:FF:000095">
    <property type="entry name" value="8-amino-7-oxononanoate synthase"/>
    <property type="match status" value="1"/>
</dbReference>
<dbReference type="FunFam" id="3.90.1150.10:FF:000036">
    <property type="entry name" value="8-amino-7-oxononanoate synthase"/>
    <property type="match status" value="1"/>
</dbReference>
<dbReference type="Gene3D" id="3.90.1150.10">
    <property type="entry name" value="Aspartate Aminotransferase, domain 1"/>
    <property type="match status" value="1"/>
</dbReference>
<dbReference type="Gene3D" id="3.40.640.10">
    <property type="entry name" value="Type I PLP-dependent aspartate aminotransferase-like (Major domain)"/>
    <property type="match status" value="1"/>
</dbReference>
<dbReference type="HAMAP" id="MF_01693">
    <property type="entry name" value="BioF_aminotrans_2"/>
    <property type="match status" value="1"/>
</dbReference>
<dbReference type="InterPro" id="IPR001917">
    <property type="entry name" value="Aminotrans_II_pyridoxalP_BS"/>
</dbReference>
<dbReference type="InterPro" id="IPR004839">
    <property type="entry name" value="Aminotransferase_I/II_large"/>
</dbReference>
<dbReference type="InterPro" id="IPR050087">
    <property type="entry name" value="AON_synthase_class-II"/>
</dbReference>
<dbReference type="InterPro" id="IPR004723">
    <property type="entry name" value="AONS_Archaea/Proteobacteria"/>
</dbReference>
<dbReference type="InterPro" id="IPR022834">
    <property type="entry name" value="AONS_Proteobacteria"/>
</dbReference>
<dbReference type="InterPro" id="IPR015424">
    <property type="entry name" value="PyrdxlP-dep_Trfase"/>
</dbReference>
<dbReference type="InterPro" id="IPR015421">
    <property type="entry name" value="PyrdxlP-dep_Trfase_major"/>
</dbReference>
<dbReference type="InterPro" id="IPR015422">
    <property type="entry name" value="PyrdxlP-dep_Trfase_small"/>
</dbReference>
<dbReference type="NCBIfam" id="TIGR00858">
    <property type="entry name" value="bioF"/>
    <property type="match status" value="1"/>
</dbReference>
<dbReference type="PANTHER" id="PTHR13693:SF100">
    <property type="entry name" value="8-AMINO-7-OXONONANOATE SYNTHASE"/>
    <property type="match status" value="1"/>
</dbReference>
<dbReference type="PANTHER" id="PTHR13693">
    <property type="entry name" value="CLASS II AMINOTRANSFERASE/8-AMINO-7-OXONONANOATE SYNTHASE"/>
    <property type="match status" value="1"/>
</dbReference>
<dbReference type="Pfam" id="PF00155">
    <property type="entry name" value="Aminotran_1_2"/>
    <property type="match status" value="1"/>
</dbReference>
<dbReference type="SUPFAM" id="SSF53383">
    <property type="entry name" value="PLP-dependent transferases"/>
    <property type="match status" value="1"/>
</dbReference>
<dbReference type="PROSITE" id="PS00599">
    <property type="entry name" value="AA_TRANSFER_CLASS_2"/>
    <property type="match status" value="1"/>
</dbReference>
<reference key="1">
    <citation type="journal article" date="2006" name="BMC Genomics">
        <title>Complete genome sequence of Shigella flexneri 5b and comparison with Shigella flexneri 2a.</title>
        <authorList>
            <person name="Nie H."/>
            <person name="Yang F."/>
            <person name="Zhang X."/>
            <person name="Yang J."/>
            <person name="Chen L."/>
            <person name="Wang J."/>
            <person name="Xiong Z."/>
            <person name="Peng J."/>
            <person name="Sun L."/>
            <person name="Dong J."/>
            <person name="Xue Y."/>
            <person name="Xu X."/>
            <person name="Chen S."/>
            <person name="Yao Z."/>
            <person name="Shen Y."/>
            <person name="Jin Q."/>
        </authorList>
    </citation>
    <scope>NUCLEOTIDE SEQUENCE [LARGE SCALE GENOMIC DNA]</scope>
    <source>
        <strain>8401</strain>
    </source>
</reference>
<name>BIOF_SHIF8</name>
<organism>
    <name type="scientific">Shigella flexneri serotype 5b (strain 8401)</name>
    <dbReference type="NCBI Taxonomy" id="373384"/>
    <lineage>
        <taxon>Bacteria</taxon>
        <taxon>Pseudomonadati</taxon>
        <taxon>Pseudomonadota</taxon>
        <taxon>Gammaproteobacteria</taxon>
        <taxon>Enterobacterales</taxon>
        <taxon>Enterobacteriaceae</taxon>
        <taxon>Shigella</taxon>
    </lineage>
</organism>
<keyword id="KW-0093">Biotin biosynthesis</keyword>
<keyword id="KW-0663">Pyridoxal phosphate</keyword>
<keyword id="KW-0808">Transferase</keyword>
<sequence>MSWQEKINAALDARRAADALRRRYPVAQGAGRWLVADDRQYLNFSSNDYLGLSHHPQIIRAWKQGAEQFGIGSGGSGHVSGYSVVHQALEEELAEWLGYSRALLFISGFAANQAVIAAMMAKEDRIVADRLSHASLLEAASLSPSQLRRFTHNDVAHLARLLASPCPGQQLVVTEGVFSMDGDSAPLAEIQQVTQQHNGWLMVDDAHGTGVIGEQGRGSCWLQKVKPELLVVTFGKGFGVSGAAVLCSSTVADYLLQFARHLIYSTSMPPAQAQALRASLAVIRRDEGDARREKLVSLIARFRAGVQDLPFTLADSCSAIQPLIVGDNSRALQLAEKLRQQGCWVTAIRPPTVPAGTARLRLTLTAAHEMQDIDRLLEVLHGNG</sequence>
<gene>
    <name evidence="1" type="primary">bioF</name>
    <name type="ordered locus">SFV_0759</name>
</gene>
<accession>Q0T6I4</accession>
<feature type="chain" id="PRO_0000381111" description="8-amino-7-oxononanoate synthase">
    <location>
        <begin position="1"/>
        <end position="384"/>
    </location>
</feature>
<feature type="binding site" evidence="1">
    <location>
        <position position="21"/>
    </location>
    <ligand>
        <name>substrate</name>
    </ligand>
</feature>
<feature type="binding site" evidence="1">
    <location>
        <begin position="108"/>
        <end position="109"/>
    </location>
    <ligand>
        <name>pyridoxal 5'-phosphate</name>
        <dbReference type="ChEBI" id="CHEBI:597326"/>
    </ligand>
</feature>
<feature type="binding site" evidence="1">
    <location>
        <position position="133"/>
    </location>
    <ligand>
        <name>substrate</name>
    </ligand>
</feature>
<feature type="binding site" evidence="1">
    <location>
        <position position="179"/>
    </location>
    <ligand>
        <name>pyridoxal 5'-phosphate</name>
        <dbReference type="ChEBI" id="CHEBI:597326"/>
    </ligand>
</feature>
<feature type="binding site" evidence="1">
    <location>
        <position position="207"/>
    </location>
    <ligand>
        <name>pyridoxal 5'-phosphate</name>
        <dbReference type="ChEBI" id="CHEBI:597326"/>
    </ligand>
</feature>
<feature type="binding site" evidence="1">
    <location>
        <position position="233"/>
    </location>
    <ligand>
        <name>pyridoxal 5'-phosphate</name>
        <dbReference type="ChEBI" id="CHEBI:597326"/>
    </ligand>
</feature>
<feature type="binding site" evidence="1">
    <location>
        <position position="352"/>
    </location>
    <ligand>
        <name>substrate</name>
    </ligand>
</feature>
<feature type="modified residue" description="N6-(pyridoxal phosphate)lysine" evidence="1">
    <location>
        <position position="236"/>
    </location>
</feature>
<protein>
    <recommendedName>
        <fullName evidence="1">8-amino-7-oxononanoate synthase</fullName>
        <shortName evidence="1">AONS</shortName>
        <ecNumber evidence="1">2.3.1.47</ecNumber>
    </recommendedName>
    <alternativeName>
        <fullName evidence="1">7-keto-8-amino-pelargonic acid synthase</fullName>
        <shortName evidence="1">7-KAP synthase</shortName>
        <shortName evidence="1">KAPA synthase</shortName>
    </alternativeName>
    <alternativeName>
        <fullName evidence="1">8-amino-7-ketopelargonate synthase</fullName>
    </alternativeName>
</protein>
<comment type="function">
    <text evidence="1">Catalyzes the decarboxylative condensation of pimeloyl-[acyl-carrier protein] and L-alanine to produce 8-amino-7-oxononanoate (AON), [acyl-carrier protein], and carbon dioxide.</text>
</comment>
<comment type="catalytic activity">
    <reaction evidence="1">
        <text>6-carboxyhexanoyl-[ACP] + L-alanine + H(+) = (8S)-8-amino-7-oxononanoate + holo-[ACP] + CO2</text>
        <dbReference type="Rhea" id="RHEA:42288"/>
        <dbReference type="Rhea" id="RHEA-COMP:9685"/>
        <dbReference type="Rhea" id="RHEA-COMP:9955"/>
        <dbReference type="ChEBI" id="CHEBI:15378"/>
        <dbReference type="ChEBI" id="CHEBI:16526"/>
        <dbReference type="ChEBI" id="CHEBI:57972"/>
        <dbReference type="ChEBI" id="CHEBI:64479"/>
        <dbReference type="ChEBI" id="CHEBI:78846"/>
        <dbReference type="ChEBI" id="CHEBI:149468"/>
        <dbReference type="EC" id="2.3.1.47"/>
    </reaction>
</comment>
<comment type="cofactor">
    <cofactor evidence="1">
        <name>pyridoxal 5'-phosphate</name>
        <dbReference type="ChEBI" id="CHEBI:597326"/>
    </cofactor>
</comment>
<comment type="pathway">
    <text evidence="1">Cofactor biosynthesis; biotin biosynthesis.</text>
</comment>
<comment type="subunit">
    <text evidence="1">Homodimer.</text>
</comment>
<comment type="similarity">
    <text evidence="1">Belongs to the class-II pyridoxal-phosphate-dependent aminotransferase family. BioF subfamily.</text>
</comment>